<keyword id="KW-1185">Reference proteome</keyword>
<evidence type="ECO:0000269" key="1">
    <source>
    </source>
</evidence>
<evidence type="ECO:0000303" key="2">
    <source>
    </source>
</evidence>
<evidence type="ECO:0000312" key="3">
    <source>
        <dbReference type="EMBL" id="QNV50518.1"/>
    </source>
</evidence>
<sequence>MERASKMPSSYLYDQ</sequence>
<organism>
    <name type="scientific">Escherichia coli (strain K12)</name>
    <dbReference type="NCBI Taxonomy" id="83333"/>
    <lineage>
        <taxon>Bacteria</taxon>
        <taxon>Pseudomonadati</taxon>
        <taxon>Pseudomonadota</taxon>
        <taxon>Gammaproteobacteria</taxon>
        <taxon>Enterobacterales</taxon>
        <taxon>Enterobacteriaceae</taxon>
        <taxon>Escherichia</taxon>
    </lineage>
</organism>
<comment type="induction">
    <text evidence="1">Expressed equally in exponential and stationary phase in rich medium (at protein level).</text>
</comment>
<protein>
    <recommendedName>
        <fullName evidence="2">Protein YadX</fullName>
    </recommendedName>
</protein>
<accession>P0DSE3</accession>
<accession>A0A7H2C771</accession>
<feature type="chain" id="PRO_0000447141" description="Protein YadX">
    <location>
        <begin position="1"/>
        <end position="15"/>
    </location>
</feature>
<gene>
    <name evidence="2" type="primary">yadX</name>
    <name evidence="3" type="ordered locus">b4765</name>
</gene>
<name>YADX_ECOLI</name>
<proteinExistence type="evidence at protein level"/>
<dbReference type="EMBL" id="U00096">
    <property type="protein sequence ID" value="QNV50518.1"/>
    <property type="molecule type" value="Genomic_DNA"/>
</dbReference>
<dbReference type="InParanoid" id="P0DSE3"/>
<dbReference type="BioCyc" id="EcoCyc:MONOMER0-4478"/>
<dbReference type="Proteomes" id="UP000000625">
    <property type="component" value="Chromosome"/>
</dbReference>
<reference key="1">
    <citation type="journal article" date="1997" name="Science">
        <title>The complete genome sequence of Escherichia coli K-12.</title>
        <authorList>
            <person name="Blattner F.R."/>
            <person name="Plunkett G. III"/>
            <person name="Bloch C.A."/>
            <person name="Perna N.T."/>
            <person name="Burland V."/>
            <person name="Riley M."/>
            <person name="Collado-Vides J."/>
            <person name="Glasner J.D."/>
            <person name="Rode C.K."/>
            <person name="Mayhew G.F."/>
            <person name="Gregor J."/>
            <person name="Davis N.W."/>
            <person name="Kirkpatrick H.A."/>
            <person name="Goeden M.A."/>
            <person name="Rose D.J."/>
            <person name="Mau B."/>
            <person name="Shao Y."/>
        </authorList>
    </citation>
    <scope>NUCLEOTIDE SEQUENCE [LARGE SCALE GENOMIC DNA]</scope>
    <source>
        <strain>K12 / MG1655 / ATCC 47076</strain>
    </source>
</reference>
<reference key="2">
    <citation type="journal article" date="2019" name="MBio">
        <title>Identifying small proteins by ribosome profiling with stalled initiation complexes.</title>
        <authorList>
            <person name="Weaver J."/>
            <person name="Mohammad F."/>
            <person name="Buskirk A.R."/>
            <person name="Storz G."/>
        </authorList>
    </citation>
    <scope>IDENTIFICATION</scope>
    <scope>INDUCTION</scope>
    <source>
        <strain>K12 / MG1655 / ATCC 47076</strain>
    </source>
</reference>